<reference key="1">
    <citation type="journal article" date="2002" name="Genome Res.">
        <title>The genome of Methanosarcina acetivorans reveals extensive metabolic and physiological diversity.</title>
        <authorList>
            <person name="Galagan J.E."/>
            <person name="Nusbaum C."/>
            <person name="Roy A."/>
            <person name="Endrizzi M.G."/>
            <person name="Macdonald P."/>
            <person name="FitzHugh W."/>
            <person name="Calvo S."/>
            <person name="Engels R."/>
            <person name="Smirnov S."/>
            <person name="Atnoor D."/>
            <person name="Brown A."/>
            <person name="Allen N."/>
            <person name="Naylor J."/>
            <person name="Stange-Thomann N."/>
            <person name="DeArellano K."/>
            <person name="Johnson R."/>
            <person name="Linton L."/>
            <person name="McEwan P."/>
            <person name="McKernan K."/>
            <person name="Talamas J."/>
            <person name="Tirrell A."/>
            <person name="Ye W."/>
            <person name="Zimmer A."/>
            <person name="Barber R.D."/>
            <person name="Cann I."/>
            <person name="Graham D.E."/>
            <person name="Grahame D.A."/>
            <person name="Guss A.M."/>
            <person name="Hedderich R."/>
            <person name="Ingram-Smith C."/>
            <person name="Kuettner H.C."/>
            <person name="Krzycki J.A."/>
            <person name="Leigh J.A."/>
            <person name="Li W."/>
            <person name="Liu J."/>
            <person name="Mukhopadhyay B."/>
            <person name="Reeve J.N."/>
            <person name="Smith K."/>
            <person name="Springer T.A."/>
            <person name="Umayam L.A."/>
            <person name="White O."/>
            <person name="White R.H."/>
            <person name="de Macario E.C."/>
            <person name="Ferry J.G."/>
            <person name="Jarrell K.F."/>
            <person name="Jing H."/>
            <person name="Macario A.J.L."/>
            <person name="Paulsen I.T."/>
            <person name="Pritchett M."/>
            <person name="Sowers K.R."/>
            <person name="Swanson R.V."/>
            <person name="Zinder S.H."/>
            <person name="Lander E."/>
            <person name="Metcalf W.W."/>
            <person name="Birren B."/>
        </authorList>
    </citation>
    <scope>NUCLEOTIDE SEQUENCE [LARGE SCALE GENOMIC DNA]</scope>
    <source>
        <strain evidence="7">ATCC 35395 / DSM 2834 / JCM 12185 / C2A</strain>
    </source>
</reference>
<reference key="2">
    <citation type="journal article" date="2016" name="Science">
        <title>The biosynthetic pathway of coenzyme F430 in methanogenic and methanotrophic archaea.</title>
        <authorList>
            <person name="Zheng K."/>
            <person name="Ngo P.D."/>
            <person name="Owens V.L."/>
            <person name="Yang X.P."/>
            <person name="Mansoorabadi S.O."/>
        </authorList>
    </citation>
    <scope>FUNCTION</scope>
    <scope>CATALYTIC ACTIVITY</scope>
    <scope>COFACTOR</scope>
    <source>
        <strain>ATCC 35395 / DSM 2834 / JCM 12185 / C2A</strain>
    </source>
</reference>
<evidence type="ECO:0000255" key="1">
    <source>
        <dbReference type="HAMAP-Rule" id="MF_00027"/>
    </source>
</evidence>
<evidence type="ECO:0000269" key="2">
    <source>
    </source>
</evidence>
<evidence type="ECO:0000303" key="3">
    <source>
    </source>
</evidence>
<evidence type="ECO:0000305" key="4"/>
<evidence type="ECO:0000305" key="5">
    <source>
    </source>
</evidence>
<evidence type="ECO:0000312" key="6">
    <source>
        <dbReference type="EMBL" id="AAM06981.1"/>
    </source>
</evidence>
<evidence type="ECO:0000312" key="7">
    <source>
        <dbReference type="Proteomes" id="UP000002487"/>
    </source>
</evidence>
<feature type="chain" id="PRO_0000442458" description="Cobyrinate a,c-diamide synthase">
    <location>
        <begin position="1"/>
        <end position="497"/>
    </location>
</feature>
<feature type="domain" description="GATase cobBQ-type" evidence="1">
    <location>
        <begin position="273"/>
        <end position="478"/>
    </location>
</feature>
<feature type="active site" description="Nucleophile" evidence="1">
    <location>
        <position position="355"/>
    </location>
</feature>
<feature type="site" description="Increases nucleophilicity of active site Cys" evidence="1">
    <location>
        <position position="470"/>
    </location>
</feature>
<gene>
    <name evidence="1" type="primary">cbiA</name>
    <name evidence="1 3" type="synonym">cfbB</name>
    <name evidence="6" type="ordered locus">MA_3626</name>
</gene>
<name>CBIA_METAC</name>
<accession>Q8TK00</accession>
<comment type="function">
    <text evidence="1 2">Catalyzes the ATP-dependent amidation of the two carboxylate groups at positions a and c of cobyrinate, using either L-glutamine or ammonia as the nitrogen source (Potential). Involved in the biosynthesis of the unique nickel-containing tetrapyrrole coenzyme F430, the prosthetic group of methyl-coenzyme M reductase (MCR), which plays a key role in methanogenesis and anaerobic methane oxidation (PubMed:27846569). Catalyzes the ATP-dependent amidation of the two carboxylate groups at positions a and c of Ni-sirohydrochlorin, using L-glutamine or ammonia as the nitrogen source (PubMed:27846569).</text>
</comment>
<comment type="catalytic activity">
    <reaction evidence="1">
        <text>cob(II)yrinate + 2 L-glutamine + 2 ATP + 2 H2O = cob(II)yrinate a,c diamide + 2 L-glutamate + 2 ADP + 2 phosphate + 2 H(+)</text>
        <dbReference type="Rhea" id="RHEA:26289"/>
        <dbReference type="ChEBI" id="CHEBI:15377"/>
        <dbReference type="ChEBI" id="CHEBI:15378"/>
        <dbReference type="ChEBI" id="CHEBI:29985"/>
        <dbReference type="ChEBI" id="CHEBI:30616"/>
        <dbReference type="ChEBI" id="CHEBI:43474"/>
        <dbReference type="ChEBI" id="CHEBI:58359"/>
        <dbReference type="ChEBI" id="CHEBI:58537"/>
        <dbReference type="ChEBI" id="CHEBI:58894"/>
        <dbReference type="ChEBI" id="CHEBI:456216"/>
        <dbReference type="EC" id="6.3.5.11"/>
    </reaction>
</comment>
<comment type="catalytic activity">
    <reaction evidence="1 2">
        <text>Ni-sirohydrochlorin + 2 L-glutamine + 2 ATP + 2 H2O = Ni-sirohydrochlorin a,c-diamide + 2 L-glutamate + 2 ADP + 2 phosphate + 2 H(+)</text>
        <dbReference type="Rhea" id="RHEA:52896"/>
        <dbReference type="ChEBI" id="CHEBI:15377"/>
        <dbReference type="ChEBI" id="CHEBI:15378"/>
        <dbReference type="ChEBI" id="CHEBI:29985"/>
        <dbReference type="ChEBI" id="CHEBI:30616"/>
        <dbReference type="ChEBI" id="CHEBI:43474"/>
        <dbReference type="ChEBI" id="CHEBI:58359"/>
        <dbReference type="ChEBI" id="CHEBI:136841"/>
        <dbReference type="ChEBI" id="CHEBI:136887"/>
        <dbReference type="ChEBI" id="CHEBI:456216"/>
        <dbReference type="EC" id="6.3.5.12"/>
    </reaction>
</comment>
<comment type="cofactor">
    <cofactor evidence="1 5">
        <name>Mg(2+)</name>
        <dbReference type="ChEBI" id="CHEBI:18420"/>
    </cofactor>
</comment>
<comment type="pathway">
    <text evidence="1">Cofactor biosynthesis; adenosylcobalamin biosynthesis; cob(II)yrinate a,c-diamide from sirohydrochlorin (anaerobic route): step 10/10.</text>
</comment>
<comment type="domain">
    <text evidence="1">Comprises of two domains. The C-terminal domain contains the binding site for glutamine and catalyzes the hydrolysis of this substrate to glutamate and ammonia. The N-terminal domain is anticipated to bind ATP, and cobyrinate or Ni-sirohydrochlorin, and catalyzes the ultimate synthesis of the diamide product. The ammonia produced via the glutaminase domain is probably translocated to the adjacent domain via a molecular tunnel, where it reacts with an activated intermediate.</text>
</comment>
<comment type="miscellaneous">
    <text evidence="1">The a and c carboxylates of cobyrinate and Ni-sirohydrochlorin are activated for nucleophilic attack via formation of a phosphorylated intermediate by ATP. CbiA catalyzes first the amidation of the c-carboxylate, and then that of the a-carboxylate.</text>
</comment>
<comment type="similarity">
    <text evidence="1 4">Belongs to the CobB/CbiA family.</text>
</comment>
<dbReference type="EC" id="6.3.5.11" evidence="1"/>
<dbReference type="EC" id="6.3.5.12" evidence="1 2"/>
<dbReference type="EMBL" id="AE010299">
    <property type="protein sequence ID" value="AAM06981.1"/>
    <property type="molecule type" value="Genomic_DNA"/>
</dbReference>
<dbReference type="RefSeq" id="WP_011023534.1">
    <property type="nucleotide sequence ID" value="NC_003552.1"/>
</dbReference>
<dbReference type="FunCoup" id="Q8TK00">
    <property type="interactions" value="94"/>
</dbReference>
<dbReference type="STRING" id="188937.MA_3626"/>
<dbReference type="EnsemblBacteria" id="AAM06981">
    <property type="protein sequence ID" value="AAM06981"/>
    <property type="gene ID" value="MA_3626"/>
</dbReference>
<dbReference type="GeneID" id="1475519"/>
<dbReference type="KEGG" id="mac:MA_3626"/>
<dbReference type="HOGENOM" id="CLU_022752_2_1_2"/>
<dbReference type="InParanoid" id="Q8TK00"/>
<dbReference type="OrthoDB" id="8896at2157"/>
<dbReference type="PhylomeDB" id="Q8TK00"/>
<dbReference type="BioCyc" id="MetaCyc:MONOMER-20114"/>
<dbReference type="UniPathway" id="UPA00148">
    <property type="reaction ID" value="UER00231"/>
</dbReference>
<dbReference type="Proteomes" id="UP000002487">
    <property type="component" value="Chromosome"/>
</dbReference>
<dbReference type="GO" id="GO:0005524">
    <property type="term" value="F:ATP binding"/>
    <property type="evidence" value="ECO:0007669"/>
    <property type="project" value="UniProtKB-UniRule"/>
</dbReference>
<dbReference type="GO" id="GO:0042242">
    <property type="term" value="F:cobyrinic acid a,c-diamide synthase activity"/>
    <property type="evidence" value="ECO:0007669"/>
    <property type="project" value="UniProtKB-UniRule"/>
</dbReference>
<dbReference type="GO" id="GO:0009236">
    <property type="term" value="P:cobalamin biosynthetic process"/>
    <property type="evidence" value="ECO:0007669"/>
    <property type="project" value="UniProtKB-UniRule"/>
</dbReference>
<dbReference type="GO" id="GO:0015948">
    <property type="term" value="P:methanogenesis"/>
    <property type="evidence" value="ECO:0007669"/>
    <property type="project" value="UniProtKB-KW"/>
</dbReference>
<dbReference type="CDD" id="cd05388">
    <property type="entry name" value="CobB_N"/>
    <property type="match status" value="1"/>
</dbReference>
<dbReference type="CDD" id="cd03130">
    <property type="entry name" value="GATase1_CobB"/>
    <property type="match status" value="1"/>
</dbReference>
<dbReference type="Gene3D" id="3.40.50.880">
    <property type="match status" value="1"/>
</dbReference>
<dbReference type="Gene3D" id="3.40.50.300">
    <property type="entry name" value="P-loop containing nucleotide triphosphate hydrolases"/>
    <property type="match status" value="1"/>
</dbReference>
<dbReference type="HAMAP" id="MF_00027">
    <property type="entry name" value="CobB_CbiA"/>
    <property type="match status" value="1"/>
</dbReference>
<dbReference type="InterPro" id="IPR004484">
    <property type="entry name" value="CbiA/CobB_synth"/>
</dbReference>
<dbReference type="InterPro" id="IPR029062">
    <property type="entry name" value="Class_I_gatase-like"/>
</dbReference>
<dbReference type="InterPro" id="IPR002586">
    <property type="entry name" value="CobQ/CobB/MinD/ParA_Nub-bd_dom"/>
</dbReference>
<dbReference type="InterPro" id="IPR011698">
    <property type="entry name" value="GATase_3"/>
</dbReference>
<dbReference type="InterPro" id="IPR027417">
    <property type="entry name" value="P-loop_NTPase"/>
</dbReference>
<dbReference type="NCBIfam" id="TIGR00379">
    <property type="entry name" value="cobB"/>
    <property type="match status" value="1"/>
</dbReference>
<dbReference type="NCBIfam" id="NF033195">
    <property type="entry name" value="F430_CfbB"/>
    <property type="match status" value="1"/>
</dbReference>
<dbReference type="NCBIfam" id="NF002204">
    <property type="entry name" value="PRK01077.1"/>
    <property type="match status" value="1"/>
</dbReference>
<dbReference type="PANTHER" id="PTHR43873">
    <property type="entry name" value="COBYRINATE A,C-DIAMIDE SYNTHASE"/>
    <property type="match status" value="1"/>
</dbReference>
<dbReference type="PANTHER" id="PTHR43873:SF1">
    <property type="entry name" value="COBYRINATE A,C-DIAMIDE SYNTHASE"/>
    <property type="match status" value="1"/>
</dbReference>
<dbReference type="Pfam" id="PF01656">
    <property type="entry name" value="CbiA"/>
    <property type="match status" value="1"/>
</dbReference>
<dbReference type="Pfam" id="PF07685">
    <property type="entry name" value="GATase_3"/>
    <property type="match status" value="1"/>
</dbReference>
<dbReference type="SUPFAM" id="SSF52317">
    <property type="entry name" value="Class I glutamine amidotransferase-like"/>
    <property type="match status" value="1"/>
</dbReference>
<dbReference type="SUPFAM" id="SSF52540">
    <property type="entry name" value="P-loop containing nucleoside triphosphate hydrolases"/>
    <property type="match status" value="1"/>
</dbReference>
<dbReference type="PROSITE" id="PS51274">
    <property type="entry name" value="GATASE_COBBQ"/>
    <property type="match status" value="1"/>
</dbReference>
<organism>
    <name type="scientific">Methanosarcina acetivorans (strain ATCC 35395 / DSM 2834 / JCM 12185 / C2A)</name>
    <dbReference type="NCBI Taxonomy" id="188937"/>
    <lineage>
        <taxon>Archaea</taxon>
        <taxon>Methanobacteriati</taxon>
        <taxon>Methanobacteriota</taxon>
        <taxon>Stenosarchaea group</taxon>
        <taxon>Methanomicrobia</taxon>
        <taxon>Methanosarcinales</taxon>
        <taxon>Methanosarcinaceae</taxon>
        <taxon>Methanosarcina</taxon>
    </lineage>
</organism>
<protein>
    <recommendedName>
        <fullName evidence="1">Cobyrinate a,c-diamide synthase</fullName>
        <ecNumber evidence="1">6.3.5.11</ecNumber>
    </recommendedName>
    <alternativeName>
        <fullName evidence="1">Cobyrinic acid a,c-diamide synthetase</fullName>
    </alternativeName>
    <alternativeName>
        <fullName evidence="1 3">Ni-sirohydrochlorin a,c-diamide synthase</fullName>
        <ecNumber evidence="1 2">6.3.5.12</ecNumber>
    </alternativeName>
    <alternativeName>
        <fullName evidence="1 3">Ni-sirohydrochlorin a,c-diamide synthetase</fullName>
    </alternativeName>
</protein>
<sequence length="497" mass="53485">MSHSKQSGTEAGSIPRVLISADRSSSGKTTISMGLMAALVSRGYKVQPFKVALDYIDPSYHTEITGRFCRNLDGYLMDENGILDVYSHACETGSGADIAIIEGVRGLYEGFEGLSDLGSTAQIAKILKCPVVFVINARSITRSAAALISGYKNFDPDVEIAGVILNNIGGRRHAQKAKEAIEHYTGVPVIGIIPRDPSMQISMRHLGLMPALEGRRRLGDGGFEDRLRGIEEIINKGIDVDRFLEIAGSAKSLTSPENSIFSPAAGAGSPRPRIGIALDEAFNFYYRDNIDLLELAGAEIVYFSPVNDPELPDVDGLYIGGGYPELFAAELEANESMRRSIKEASAAGMPIYAECGGLMYLTEKISTGVPGKGTYHDASMPESTYIMVGALPGHTIMGQTRVVSYNIGTLDRDCLIGKEGNSFKGHEFHHSEIREIPEYAEFAIALLRGTGIKGDRDGLIVGNTLGSYAHLHGVAYRELAGSLVEAAGKFRASRAPR</sequence>
<keyword id="KW-0067">ATP-binding</keyword>
<keyword id="KW-0169">Cobalamin biosynthesis</keyword>
<keyword id="KW-0315">Glutamine amidotransferase</keyword>
<keyword id="KW-0436">Ligase</keyword>
<keyword id="KW-0460">Magnesium</keyword>
<keyword id="KW-0484">Methanogenesis</keyword>
<keyword id="KW-0547">Nucleotide-binding</keyword>
<keyword id="KW-1185">Reference proteome</keyword>
<proteinExistence type="evidence at protein level"/>